<feature type="chain" id="PRO_1000061567" description="Putative pre-16S rRNA nuclease">
    <location>
        <begin position="1"/>
        <end position="138"/>
    </location>
</feature>
<sequence>MSGTLLAFDFGTKSIGVAVGQRITGTARPLPAIKAQDGTPDWNLIERLLKEWQPDEIIVGLPLNMDGTEQPLTARARKFANRIHGRFGVEVKLHDERLSTVEARSGLFEQGGYRALNKGKVDSASAVIILESYFEQGY</sequence>
<evidence type="ECO:0000255" key="1">
    <source>
        <dbReference type="HAMAP-Rule" id="MF_00651"/>
    </source>
</evidence>
<name>YQGF_SHIF8</name>
<dbReference type="EC" id="3.1.-.-" evidence="1"/>
<dbReference type="EMBL" id="CP000266">
    <property type="protein sequence ID" value="ABF05072.1"/>
    <property type="molecule type" value="Genomic_DNA"/>
</dbReference>
<dbReference type="SMR" id="Q0T0U3"/>
<dbReference type="KEGG" id="sfv:SFV_3003"/>
<dbReference type="HOGENOM" id="CLU_098240_3_0_6"/>
<dbReference type="Proteomes" id="UP000000659">
    <property type="component" value="Chromosome"/>
</dbReference>
<dbReference type="GO" id="GO:0005829">
    <property type="term" value="C:cytosol"/>
    <property type="evidence" value="ECO:0007669"/>
    <property type="project" value="TreeGrafter"/>
</dbReference>
<dbReference type="GO" id="GO:0004518">
    <property type="term" value="F:nuclease activity"/>
    <property type="evidence" value="ECO:0007669"/>
    <property type="project" value="UniProtKB-KW"/>
</dbReference>
<dbReference type="GO" id="GO:0000967">
    <property type="term" value="P:rRNA 5'-end processing"/>
    <property type="evidence" value="ECO:0007669"/>
    <property type="project" value="UniProtKB-UniRule"/>
</dbReference>
<dbReference type="CDD" id="cd16964">
    <property type="entry name" value="YqgF"/>
    <property type="match status" value="1"/>
</dbReference>
<dbReference type="FunFam" id="3.30.420.140:FF:000002">
    <property type="entry name" value="Putative pre-16S rRNA nuclease"/>
    <property type="match status" value="1"/>
</dbReference>
<dbReference type="Gene3D" id="3.30.420.140">
    <property type="entry name" value="YqgF/RNase H-like domain"/>
    <property type="match status" value="1"/>
</dbReference>
<dbReference type="HAMAP" id="MF_00651">
    <property type="entry name" value="Nuclease_YqgF"/>
    <property type="match status" value="1"/>
</dbReference>
<dbReference type="InterPro" id="IPR012337">
    <property type="entry name" value="RNaseH-like_sf"/>
</dbReference>
<dbReference type="InterPro" id="IPR005227">
    <property type="entry name" value="YqgF"/>
</dbReference>
<dbReference type="InterPro" id="IPR006641">
    <property type="entry name" value="YqgF/RNaseH-like_dom"/>
</dbReference>
<dbReference type="InterPro" id="IPR037027">
    <property type="entry name" value="YqgF/RNaseH-like_dom_sf"/>
</dbReference>
<dbReference type="NCBIfam" id="TIGR00250">
    <property type="entry name" value="RNAse_H_YqgF"/>
    <property type="match status" value="1"/>
</dbReference>
<dbReference type="PANTHER" id="PTHR33317">
    <property type="entry name" value="POLYNUCLEOTIDYL TRANSFERASE, RIBONUCLEASE H-LIKE SUPERFAMILY PROTEIN"/>
    <property type="match status" value="1"/>
</dbReference>
<dbReference type="PANTHER" id="PTHR33317:SF4">
    <property type="entry name" value="POLYNUCLEOTIDYL TRANSFERASE, RIBONUCLEASE H-LIKE SUPERFAMILY PROTEIN"/>
    <property type="match status" value="1"/>
</dbReference>
<dbReference type="Pfam" id="PF03652">
    <property type="entry name" value="RuvX"/>
    <property type="match status" value="1"/>
</dbReference>
<dbReference type="SMART" id="SM00732">
    <property type="entry name" value="YqgFc"/>
    <property type="match status" value="1"/>
</dbReference>
<dbReference type="SUPFAM" id="SSF53098">
    <property type="entry name" value="Ribonuclease H-like"/>
    <property type="match status" value="1"/>
</dbReference>
<comment type="function">
    <text evidence="1">Could be a nuclease involved in processing of the 5'-end of pre-16S rRNA.</text>
</comment>
<comment type="subcellular location">
    <subcellularLocation>
        <location evidence="1">Cytoplasm</location>
    </subcellularLocation>
</comment>
<comment type="similarity">
    <text evidence="1">Belongs to the YqgF nuclease family.</text>
</comment>
<organism>
    <name type="scientific">Shigella flexneri serotype 5b (strain 8401)</name>
    <dbReference type="NCBI Taxonomy" id="373384"/>
    <lineage>
        <taxon>Bacteria</taxon>
        <taxon>Pseudomonadati</taxon>
        <taxon>Pseudomonadota</taxon>
        <taxon>Gammaproteobacteria</taxon>
        <taxon>Enterobacterales</taxon>
        <taxon>Enterobacteriaceae</taxon>
        <taxon>Shigella</taxon>
    </lineage>
</organism>
<accession>Q0T0U3</accession>
<keyword id="KW-0963">Cytoplasm</keyword>
<keyword id="KW-0378">Hydrolase</keyword>
<keyword id="KW-0540">Nuclease</keyword>
<keyword id="KW-0690">Ribosome biogenesis</keyword>
<gene>
    <name evidence="1" type="primary">yqgF</name>
    <name type="ordered locus">SFV_3003</name>
</gene>
<proteinExistence type="inferred from homology"/>
<protein>
    <recommendedName>
        <fullName evidence="1">Putative pre-16S rRNA nuclease</fullName>
        <ecNumber evidence="1">3.1.-.-</ecNumber>
    </recommendedName>
</protein>
<reference key="1">
    <citation type="journal article" date="2006" name="BMC Genomics">
        <title>Complete genome sequence of Shigella flexneri 5b and comparison with Shigella flexneri 2a.</title>
        <authorList>
            <person name="Nie H."/>
            <person name="Yang F."/>
            <person name="Zhang X."/>
            <person name="Yang J."/>
            <person name="Chen L."/>
            <person name="Wang J."/>
            <person name="Xiong Z."/>
            <person name="Peng J."/>
            <person name="Sun L."/>
            <person name="Dong J."/>
            <person name="Xue Y."/>
            <person name="Xu X."/>
            <person name="Chen S."/>
            <person name="Yao Z."/>
            <person name="Shen Y."/>
            <person name="Jin Q."/>
        </authorList>
    </citation>
    <scope>NUCLEOTIDE SEQUENCE [LARGE SCALE GENOMIC DNA]</scope>
    <source>
        <strain>8401</strain>
    </source>
</reference>